<evidence type="ECO:0000250" key="1"/>
<evidence type="ECO:0000255" key="2"/>
<evidence type="ECO:0000255" key="3">
    <source>
        <dbReference type="PROSITE-ProRule" id="PRU01056"/>
    </source>
</evidence>
<evidence type="ECO:0000269" key="4">
    <source>
    </source>
</evidence>
<evidence type="ECO:0000269" key="5">
    <source>
    </source>
</evidence>
<evidence type="ECO:0000269" key="6">
    <source>
    </source>
</evidence>
<evidence type="ECO:0000269" key="7">
    <source>
    </source>
</evidence>
<evidence type="ECO:0000269" key="8">
    <source>
    </source>
</evidence>
<evidence type="ECO:0000269" key="9">
    <source>
    </source>
</evidence>
<evidence type="ECO:0000269" key="10">
    <source>
    </source>
</evidence>
<evidence type="ECO:0000269" key="11">
    <source>
    </source>
</evidence>
<evidence type="ECO:0000269" key="12">
    <source>
    </source>
</evidence>
<evidence type="ECO:0000269" key="13">
    <source>
    </source>
</evidence>
<gene>
    <name type="primary">CDC11</name>
    <name type="ordered locus">CAALFM_C500070WA</name>
    <name type="ORF">CaO19.5691</name>
</gene>
<feature type="chain" id="PRO_0000424349" description="Septin CDC11">
    <location>
        <begin position="1"/>
        <end position="402"/>
    </location>
</feature>
<feature type="domain" description="Septin-type G" evidence="3">
    <location>
        <begin position="21"/>
        <end position="307"/>
    </location>
</feature>
<feature type="region of interest" description="G1 motif" evidence="3">
    <location>
        <begin position="31"/>
        <end position="38"/>
    </location>
</feature>
<feature type="region of interest" description="G3 motif" evidence="3">
    <location>
        <begin position="89"/>
        <end position="92"/>
    </location>
</feature>
<feature type="region of interest" description="G4 motif" evidence="3">
    <location>
        <begin position="171"/>
        <end position="174"/>
    </location>
</feature>
<feature type="coiled-coil region" evidence="2">
    <location>
        <begin position="318"/>
        <end position="376"/>
    </location>
</feature>
<feature type="short sequence motif" description="Basic motif" evidence="1">
    <location>
        <begin position="14"/>
        <end position="21"/>
    </location>
</feature>
<feature type="binding site" evidence="1">
    <location>
        <begin position="31"/>
        <end position="38"/>
    </location>
    <ligand>
        <name>GTP</name>
        <dbReference type="ChEBI" id="CHEBI:37565"/>
    </ligand>
</feature>
<feature type="binding site" evidence="1">
    <location>
        <begin position="172"/>
        <end position="180"/>
    </location>
    <ligand>
        <name>GTP</name>
        <dbReference type="ChEBI" id="CHEBI:37565"/>
    </ligand>
</feature>
<feature type="binding site" evidence="1">
    <location>
        <position position="233"/>
    </location>
    <ligand>
        <name>GTP</name>
        <dbReference type="ChEBI" id="CHEBI:37565"/>
    </ligand>
</feature>
<feature type="modified residue" description="N-acetylmethionine" evidence="11">
    <location>
        <position position="1"/>
    </location>
</feature>
<feature type="modified residue" description="Phosphoserine" evidence="11">
    <location>
        <position position="4"/>
    </location>
</feature>
<feature type="modified residue" description="Phosphoserine; by CDC28" evidence="11">
    <location>
        <position position="394"/>
    </location>
</feature>
<feature type="modified residue" description="Phosphoserine; by GIN4" evidence="11">
    <location>
        <position position="395"/>
    </location>
</feature>
<feature type="mutagenesis site" description="Blocks phosphorylation of Ser-394 and impairs hyphal morphogenesis." evidence="11">
    <original>S</original>
    <variation>A</variation>
    <location>
        <position position="394"/>
    </location>
</feature>
<feature type="mutagenesis site" description="Blocks phosphorylation of Ser-394 and Ser-395 and impairs hyphal morphogenesis." evidence="11">
    <original>S</original>
    <variation>A</variation>
    <location>
        <position position="395"/>
    </location>
</feature>
<dbReference type="EMBL" id="CP017627">
    <property type="protein sequence ID" value="AOW29453.1"/>
    <property type="molecule type" value="Genomic_DNA"/>
</dbReference>
<dbReference type="RefSeq" id="XP_710520.1">
    <property type="nucleotide sequence ID" value="XM_705428.1"/>
</dbReference>
<dbReference type="SMR" id="G1UB61"/>
<dbReference type="BioGRID" id="1230981">
    <property type="interactions" value="9"/>
</dbReference>
<dbReference type="FunCoup" id="G1UB61">
    <property type="interactions" value="180"/>
</dbReference>
<dbReference type="STRING" id="237561.G1UB61"/>
<dbReference type="iPTMnet" id="G1UB61"/>
<dbReference type="EnsemblFungi" id="C5_00070W_A-T">
    <property type="protein sequence ID" value="C5_00070W_A-T-p1"/>
    <property type="gene ID" value="C5_00070W_A"/>
</dbReference>
<dbReference type="GeneID" id="3647888"/>
<dbReference type="KEGG" id="cal:CAALFM_C500070WA"/>
<dbReference type="CGD" id="CAL0000177264">
    <property type="gene designation" value="CDC11"/>
</dbReference>
<dbReference type="VEuPathDB" id="FungiDB:C5_00070W_A"/>
<dbReference type="eggNOG" id="KOG2655">
    <property type="taxonomic scope" value="Eukaryota"/>
</dbReference>
<dbReference type="HOGENOM" id="CLU_017718_7_4_1"/>
<dbReference type="InParanoid" id="G1UB61"/>
<dbReference type="OMA" id="NNGIHIY"/>
<dbReference type="OrthoDB" id="416553at2759"/>
<dbReference type="Proteomes" id="UP000000559">
    <property type="component" value="Chromosome 5"/>
</dbReference>
<dbReference type="GO" id="GO:0005619">
    <property type="term" value="C:ascospore wall"/>
    <property type="evidence" value="ECO:0007669"/>
    <property type="project" value="EnsemblFungi"/>
</dbReference>
<dbReference type="GO" id="GO:0032153">
    <property type="term" value="C:cell division site"/>
    <property type="evidence" value="ECO:0000318"/>
    <property type="project" value="GO_Central"/>
</dbReference>
<dbReference type="GO" id="GO:0005935">
    <property type="term" value="C:cellular bud neck"/>
    <property type="evidence" value="ECO:0000314"/>
    <property type="project" value="CGD"/>
</dbReference>
<dbReference type="GO" id="GO:0000144">
    <property type="term" value="C:cellular bud neck septin ring"/>
    <property type="evidence" value="ECO:0000314"/>
    <property type="project" value="CGD"/>
</dbReference>
<dbReference type="GO" id="GO:0000399">
    <property type="term" value="C:cellular bud neck septin structure"/>
    <property type="evidence" value="ECO:0000314"/>
    <property type="project" value="CGD"/>
</dbReference>
<dbReference type="GO" id="GO:0005881">
    <property type="term" value="C:cytoplasmic microtubule"/>
    <property type="evidence" value="ECO:0007669"/>
    <property type="project" value="EnsemblFungi"/>
</dbReference>
<dbReference type="GO" id="GO:0005829">
    <property type="term" value="C:cytosol"/>
    <property type="evidence" value="ECO:0000318"/>
    <property type="project" value="GO_Central"/>
</dbReference>
<dbReference type="GO" id="GO:1990317">
    <property type="term" value="C:Gin4 complex"/>
    <property type="evidence" value="ECO:0007669"/>
    <property type="project" value="EnsemblFungi"/>
</dbReference>
<dbReference type="GO" id="GO:0032168">
    <property type="term" value="C:hyphal septin ring"/>
    <property type="evidence" value="ECO:0000314"/>
    <property type="project" value="CGD"/>
</dbReference>
<dbReference type="GO" id="GO:0001411">
    <property type="term" value="C:hyphal tip"/>
    <property type="evidence" value="ECO:0000314"/>
    <property type="project" value="CGD"/>
</dbReference>
<dbReference type="GO" id="GO:0001400">
    <property type="term" value="C:mating projection base"/>
    <property type="evidence" value="ECO:0007669"/>
    <property type="project" value="EnsemblFungi"/>
</dbReference>
<dbReference type="GO" id="GO:0036391">
    <property type="term" value="C:medial cortex septin ring"/>
    <property type="evidence" value="ECO:0007669"/>
    <property type="project" value="EnsemblFungi"/>
</dbReference>
<dbReference type="GO" id="GO:0072687">
    <property type="term" value="C:meiotic spindle"/>
    <property type="evidence" value="ECO:0007669"/>
    <property type="project" value="EnsemblFungi"/>
</dbReference>
<dbReference type="GO" id="GO:0015630">
    <property type="term" value="C:microtubule cytoskeleton"/>
    <property type="evidence" value="ECO:0000318"/>
    <property type="project" value="GO_Central"/>
</dbReference>
<dbReference type="GO" id="GO:0120104">
    <property type="term" value="C:mitotic actomyosin contractile ring, proximal layer"/>
    <property type="evidence" value="ECO:0007669"/>
    <property type="project" value="EnsemblFungi"/>
</dbReference>
<dbReference type="GO" id="GO:0032151">
    <property type="term" value="C:mitotic septin complex"/>
    <property type="evidence" value="ECO:0007669"/>
    <property type="project" value="EnsemblFungi"/>
</dbReference>
<dbReference type="GO" id="GO:0005628">
    <property type="term" value="C:prospore membrane"/>
    <property type="evidence" value="ECO:0007669"/>
    <property type="project" value="EnsemblFungi"/>
</dbReference>
<dbReference type="GO" id="GO:0031105">
    <property type="term" value="C:septin complex"/>
    <property type="evidence" value="ECO:0000318"/>
    <property type="project" value="GO_Central"/>
</dbReference>
<dbReference type="GO" id="GO:0032160">
    <property type="term" value="C:septin filament array"/>
    <property type="evidence" value="ECO:0007669"/>
    <property type="project" value="EnsemblFungi"/>
</dbReference>
<dbReference type="GO" id="GO:0005940">
    <property type="term" value="C:septin ring"/>
    <property type="evidence" value="ECO:0000314"/>
    <property type="project" value="CGD"/>
</dbReference>
<dbReference type="GO" id="GO:0005876">
    <property type="term" value="C:spindle microtubule"/>
    <property type="evidence" value="ECO:0007669"/>
    <property type="project" value="EnsemblFungi"/>
</dbReference>
<dbReference type="GO" id="GO:0005525">
    <property type="term" value="F:GTP binding"/>
    <property type="evidence" value="ECO:0007669"/>
    <property type="project" value="UniProtKB-KW"/>
</dbReference>
<dbReference type="GO" id="GO:0003924">
    <property type="term" value="F:GTPase activity"/>
    <property type="evidence" value="ECO:0000318"/>
    <property type="project" value="GO_Central"/>
</dbReference>
<dbReference type="GO" id="GO:0042802">
    <property type="term" value="F:identical protein binding"/>
    <property type="evidence" value="ECO:0007669"/>
    <property type="project" value="EnsemblFungi"/>
</dbReference>
<dbReference type="GO" id="GO:0060090">
    <property type="term" value="F:molecular adaptor activity"/>
    <property type="evidence" value="ECO:0000318"/>
    <property type="project" value="GO_Central"/>
</dbReference>
<dbReference type="GO" id="GO:0070273">
    <property type="term" value="F:phosphatidylinositol-4-phosphate binding"/>
    <property type="evidence" value="ECO:0007669"/>
    <property type="project" value="EnsemblFungi"/>
</dbReference>
<dbReference type="GO" id="GO:0010314">
    <property type="term" value="F:phosphatidylinositol-5-phosphate binding"/>
    <property type="evidence" value="ECO:0007669"/>
    <property type="project" value="EnsemblFungi"/>
</dbReference>
<dbReference type="GO" id="GO:0005200">
    <property type="term" value="F:structural constituent of cytoskeleton"/>
    <property type="evidence" value="ECO:0007669"/>
    <property type="project" value="EnsemblFungi"/>
</dbReference>
<dbReference type="GO" id="GO:0000915">
    <property type="term" value="P:actomyosin contractile ring assembly"/>
    <property type="evidence" value="ECO:0000318"/>
    <property type="project" value="GO_Central"/>
</dbReference>
<dbReference type="GO" id="GO:0032186">
    <property type="term" value="P:cellular bud neck septin ring organization"/>
    <property type="evidence" value="ECO:0000318"/>
    <property type="project" value="GO_Central"/>
</dbReference>
<dbReference type="GO" id="GO:0006033">
    <property type="term" value="P:chitin localization"/>
    <property type="evidence" value="ECO:0000315"/>
    <property type="project" value="CGD"/>
</dbReference>
<dbReference type="GO" id="GO:0001410">
    <property type="term" value="P:chlamydospore formation"/>
    <property type="evidence" value="ECO:0000315"/>
    <property type="project" value="CGD"/>
</dbReference>
<dbReference type="GO" id="GO:0061640">
    <property type="term" value="P:cytoskeleton-dependent cytokinesis"/>
    <property type="evidence" value="ECO:0000318"/>
    <property type="project" value="GO_Central"/>
</dbReference>
<dbReference type="GO" id="GO:0000917">
    <property type="term" value="P:division septum assembly"/>
    <property type="evidence" value="ECO:0000318"/>
    <property type="project" value="GO_Central"/>
</dbReference>
<dbReference type="GO" id="GO:0070783">
    <property type="term" value="P:growth of unicellular organism as a thread of attached cells"/>
    <property type="evidence" value="ECO:0000315"/>
    <property type="project" value="CGD"/>
</dbReference>
<dbReference type="GO" id="GO:0030448">
    <property type="term" value="P:hyphal growth"/>
    <property type="evidence" value="ECO:0000315"/>
    <property type="project" value="CGD"/>
</dbReference>
<dbReference type="GO" id="GO:0030011">
    <property type="term" value="P:maintenance of cell polarity"/>
    <property type="evidence" value="ECO:0000315"/>
    <property type="project" value="CGD"/>
</dbReference>
<dbReference type="GO" id="GO:0007097">
    <property type="term" value="P:nuclear migration"/>
    <property type="evidence" value="ECO:0000315"/>
    <property type="project" value="CGD"/>
</dbReference>
<dbReference type="GO" id="GO:0008104">
    <property type="term" value="P:protein localization"/>
    <property type="evidence" value="ECO:0000315"/>
    <property type="project" value="CGD"/>
</dbReference>
<dbReference type="GO" id="GO:0097271">
    <property type="term" value="P:protein localization to bud neck"/>
    <property type="evidence" value="ECO:0000318"/>
    <property type="project" value="GO_Central"/>
</dbReference>
<dbReference type="GO" id="GO:0000921">
    <property type="term" value="P:septin ring assembly"/>
    <property type="evidence" value="ECO:0000315"/>
    <property type="project" value="CGD"/>
</dbReference>
<dbReference type="CDD" id="cd01850">
    <property type="entry name" value="CDC_Septin"/>
    <property type="match status" value="1"/>
</dbReference>
<dbReference type="FunFam" id="3.40.50.300:FF:002908">
    <property type="entry name" value="Septin CDC11"/>
    <property type="match status" value="1"/>
</dbReference>
<dbReference type="Gene3D" id="3.40.50.300">
    <property type="entry name" value="P-loop containing nucleotide triphosphate hydrolases"/>
    <property type="match status" value="1"/>
</dbReference>
<dbReference type="InterPro" id="IPR030379">
    <property type="entry name" value="G_SEPTIN_dom"/>
</dbReference>
<dbReference type="InterPro" id="IPR027417">
    <property type="entry name" value="P-loop_NTPase"/>
</dbReference>
<dbReference type="InterPro" id="IPR016491">
    <property type="entry name" value="Septin"/>
</dbReference>
<dbReference type="PANTHER" id="PTHR18884">
    <property type="entry name" value="SEPTIN"/>
    <property type="match status" value="1"/>
</dbReference>
<dbReference type="Pfam" id="PF00735">
    <property type="entry name" value="Septin"/>
    <property type="match status" value="1"/>
</dbReference>
<dbReference type="PIRSF" id="PIRSF006698">
    <property type="entry name" value="Septin"/>
    <property type="match status" value="1"/>
</dbReference>
<dbReference type="SUPFAM" id="SSF52540">
    <property type="entry name" value="P-loop containing nucleoside triphosphate hydrolases"/>
    <property type="match status" value="1"/>
</dbReference>
<dbReference type="PROSITE" id="PS51719">
    <property type="entry name" value="G_SEPTIN"/>
    <property type="match status" value="1"/>
</dbReference>
<accession>G1UB61</accession>
<accession>A0A1D8PMT9</accession>
<name>CDC11_CANAL</name>
<proteinExistence type="evidence at protein level"/>
<keyword id="KW-0007">Acetylation</keyword>
<keyword id="KW-0131">Cell cycle</keyword>
<keyword id="KW-0132">Cell division</keyword>
<keyword id="KW-0175">Coiled coil</keyword>
<keyword id="KW-0342">GTP-binding</keyword>
<keyword id="KW-0547">Nucleotide-binding</keyword>
<keyword id="KW-0597">Phosphoprotein</keyword>
<keyword id="KW-1185">Reference proteome</keyword>
<keyword id="KW-0843">Virulence</keyword>
<organism>
    <name type="scientific">Candida albicans (strain SC5314 / ATCC MYA-2876)</name>
    <name type="common">Yeast</name>
    <dbReference type="NCBI Taxonomy" id="237561"/>
    <lineage>
        <taxon>Eukaryota</taxon>
        <taxon>Fungi</taxon>
        <taxon>Dikarya</taxon>
        <taxon>Ascomycota</taxon>
        <taxon>Saccharomycotina</taxon>
        <taxon>Pichiomycetes</taxon>
        <taxon>Debaryomycetaceae</taxon>
        <taxon>Candida/Lodderomyces clade</taxon>
        <taxon>Candida</taxon>
    </lineage>
</organism>
<reference key="1">
    <citation type="journal article" date="2004" name="Proc. Natl. Acad. Sci. U.S.A.">
        <title>The diploid genome sequence of Candida albicans.</title>
        <authorList>
            <person name="Jones T."/>
            <person name="Federspiel N.A."/>
            <person name="Chibana H."/>
            <person name="Dungan J."/>
            <person name="Kalman S."/>
            <person name="Magee B.B."/>
            <person name="Newport G."/>
            <person name="Thorstenson Y.R."/>
            <person name="Agabian N."/>
            <person name="Magee P.T."/>
            <person name="Davis R.W."/>
            <person name="Scherer S."/>
        </authorList>
    </citation>
    <scope>NUCLEOTIDE SEQUENCE [LARGE SCALE GENOMIC DNA]</scope>
    <source>
        <strain>SC5314 / ATCC MYA-2876</strain>
    </source>
</reference>
<reference key="2">
    <citation type="journal article" date="2007" name="Genome Biol.">
        <title>Assembly of the Candida albicans genome into sixteen supercontigs aligned on the eight chromosomes.</title>
        <authorList>
            <person name="van het Hoog M."/>
            <person name="Rast T.J."/>
            <person name="Martchenko M."/>
            <person name="Grindle S."/>
            <person name="Dignard D."/>
            <person name="Hogues H."/>
            <person name="Cuomo C."/>
            <person name="Berriman M."/>
            <person name="Scherer S."/>
            <person name="Magee B.B."/>
            <person name="Whiteway M."/>
            <person name="Chibana H."/>
            <person name="Nantel A."/>
            <person name="Magee P.T."/>
        </authorList>
    </citation>
    <scope>GENOME REANNOTATION</scope>
    <source>
        <strain>SC5314 / ATCC MYA-2876</strain>
    </source>
</reference>
<reference key="3">
    <citation type="journal article" date="2013" name="Genome Biol.">
        <title>Assembly of a phased diploid Candida albicans genome facilitates allele-specific measurements and provides a simple model for repeat and indel structure.</title>
        <authorList>
            <person name="Muzzey D."/>
            <person name="Schwartz K."/>
            <person name="Weissman J.S."/>
            <person name="Sherlock G."/>
        </authorList>
    </citation>
    <scope>NUCLEOTIDE SEQUENCE [LARGE SCALE GENOMIC DNA]</scope>
    <scope>GENOME REANNOTATION</scope>
    <source>
        <strain>SC5314 / ATCC MYA-2876</strain>
    </source>
</reference>
<reference key="4">
    <citation type="journal article" date="2001" name="Mol. Microbiol.">
        <title>The germ tubes of Candida albicans hyphae and pseudohyphae show different patterns of septin ring localization.</title>
        <authorList>
            <person name="Sudbery P.E."/>
        </authorList>
    </citation>
    <scope>SUBCELLULAR LOCATION</scope>
    <scope>FUNCTION</scope>
</reference>
<reference key="5">
    <citation type="journal article" date="2002" name="Mol. Biol. Cell">
        <title>Septin function in Candida albicans morphogenesis.</title>
        <authorList>
            <person name="Warenda A.J."/>
            <person name="Konopka J.B."/>
        </authorList>
    </citation>
    <scope>FUNCTION</scope>
    <scope>SUBCELLULAR LOCATION</scope>
</reference>
<reference key="6">
    <citation type="journal article" date="2003" name="Infect. Immun.">
        <title>Candida albicans septin mutants are defective for invasive growth and virulence.</title>
        <authorList>
            <person name="Warenda A.J."/>
            <person name="Kauffman S."/>
            <person name="Sherrill T.P."/>
            <person name="Becker J.M."/>
            <person name="Konopka J.B."/>
        </authorList>
    </citation>
    <scope>FUNCTION</scope>
    <scope>DISRUPTION PHENOTYPE</scope>
</reference>
<reference key="7">
    <citation type="journal article" date="2004" name="Yeast">
        <title>Tandem affinity purification of the Candida albicans septin protein complex.</title>
        <authorList>
            <person name="Kaneko A."/>
            <person name="Umeyama T."/>
            <person name="Hanaoka N."/>
            <person name="Monk B.C."/>
            <person name="Uehara Y."/>
            <person name="Niimi M."/>
        </authorList>
    </citation>
    <scope>IDENTIFICATION BY MASS SPECTROMETRY</scope>
    <scope>IDENTIFICATION IN THE SEPTIN COMPLEX</scope>
</reference>
<reference key="8">
    <citation type="journal article" date="2005" name="Eukaryot. Cell">
        <title>Cell cycle dynamics and quorum sensing in Candida albicans chlamydospores are distinct from budding and hyphal growth.</title>
        <authorList>
            <person name="Martin S.W."/>
            <person name="Douglas L.M."/>
            <person name="Konopka J.B."/>
        </authorList>
    </citation>
    <scope>FUNCTION</scope>
    <scope>DISRUPTION PHENOTYPE</scope>
</reference>
<reference key="9">
    <citation type="journal article" date="2005" name="Mol. Microbiol.">
        <title>Candida albicans protein kinase CaHsl1p regulates cell elongation and virulence.</title>
        <authorList>
            <person name="Umeyama T."/>
            <person name="Kaneko A."/>
            <person name="Nagai Y."/>
            <person name="Hanaoka N."/>
            <person name="Tanabe K."/>
            <person name="Takano Y."/>
            <person name="Niimi M."/>
            <person name="Uehara Y."/>
        </authorList>
    </citation>
    <scope>INTERACTION WITH HSL1</scope>
</reference>
<reference key="10">
    <citation type="journal article" date="2007" name="Dev. Cell">
        <title>Cyclin-dependent kinases control septin phosphorylation in Candida albicans hyphal development.</title>
        <authorList>
            <person name="Sinha I."/>
            <person name="Wang Y.M."/>
            <person name="Philp R."/>
            <person name="Li C.R."/>
            <person name="Yap W.H."/>
            <person name="Wang Y."/>
        </authorList>
    </citation>
    <scope>PHOSPHORYLATION AT SER-4; SER-394 AND SER-395</scope>
    <scope>MUTAGENESIS OF SER-394 AND SER-395</scope>
    <scope>ACETYLATION AT MET-1</scope>
    <scope>FUNCTION</scope>
</reference>
<reference key="11">
    <citation type="journal article" date="2007" name="J. Cell Sci.">
        <title>Candida albicans hyphal morphogenesis occurs in Sec3p-independent and Sec3p-dependent phases separated by septin ring formation.</title>
        <authorList>
            <person name="Li C.R."/>
            <person name="Lee R.T."/>
            <person name="Wang Y.M."/>
            <person name="Zheng X.D."/>
            <person name="Wang Y."/>
        </authorList>
    </citation>
    <scope>FUNCTION</scope>
</reference>
<reference key="12">
    <citation type="journal article" date="2010" name="Eukaryot. Cell">
        <title>A photostable green fluorescent protein variant for analysis of protein localization in Candida albicans.</title>
        <authorList>
            <person name="Zhang C."/>
            <person name="Konopka J.B."/>
        </authorList>
    </citation>
    <scope>SUBCELLULAR LOCATION</scope>
</reference>
<reference key="13">
    <citation type="journal article" date="2012" name="Antimicrob. Agents Chemother.">
        <title>Rapid redistribution of phosphatidylinositol-(4,5)-bisphosphate and septins during the Candida albicans response to caspofungin.</title>
        <authorList>
            <person name="Badrane H."/>
            <person name="Nguyen M.H."/>
            <person name="Blankenship J.R."/>
            <person name="Cheng S."/>
            <person name="Hao B."/>
            <person name="Mitchell A.P."/>
            <person name="Clancy C.J."/>
        </authorList>
    </citation>
    <scope>DISRUPTION PHENOTYPE</scope>
    <scope>SUBCELLULAR LOCATION</scope>
</reference>
<sequence>MNYSTENVSSAALRKRKTLKKSINFSIMIIGESGSGRSTLINTLCGGNSIVPTSSTATQDPFTKKLTLRHENVELEDNEGHKISLNIIDTPNFANSINCDDDFKIIVDFIRHQFDEVLLEESRVKRNPRFKDGRIHVLIYMINPTGHGLSDIDVKFLQHVNNLVNIIPIISKADSLTPKELKLNKELILEDLNNYGINFYKFNEYDYEQDYIDEEIIEYNKYLNSLIPFAIIGANEYRSNPNGSEDEDDILKLRILNKDFKPIDIDNAEINDFTILKNVLLVTHLNEFKDITHDSIYENYRTEALSGKQFQYVNKDSAKQEISESDYLMKEEQIKLEEERLRKFEERVHQDLINKRKELLERENELKEIEKRLLAEGLKFDENGDVVKVHEEESSENEVKVI</sequence>
<comment type="function">
    <text evidence="4 5 6 9 10 11">Septins are GTPases involved in cytokinesis that assemble early in the cell cycle as a patch at the incipient bud site and form a ring before bud emergence, which transforms into an hour-glass shaped collar of cortical filaments that spans both sides of the mother-bud neck. This collar persists until just before cytokinesis, when it splits into two rings that occupy opposite sides of the neck. The septins at the bud neck serve as a structural scaffold that recruits different components involved in diverse processes at specific stages during the cell cycle. Many proteins bind asymmetrically to the septin collar. The septin assembly is regulated by protein kinase GIN4. Septins are also involved in cell morphogenesis, chlamydospores morphogenesis, bud site selection, chitin deposition, cell cycle regulation, cell compartmentalization, and spore wall formation. CDC11 is required for the correct localization of SEC3 at bud tips and bud necks. Plays a key role in invasive growth and virulence.</text>
</comment>
<comment type="subunit">
    <text evidence="7 8">Component of the septin complex which consists of CDC3, CDC10, CDC11, CDC12 and probably SEP7. The purified septin complex appeared to have a stoichiometry of 2 CDC3, 1 to 2 CDC10, 1 CDC11, 2 CDC12, and 1 or none SEP7 subunit. Interacts with HSL1.</text>
</comment>
<comment type="subcellular location">
    <subcellularLocation>
        <location evidence="4 5 12 13">Bud neck</location>
    </subcellularLocation>
    <text>Localizes to a tight ring at the bud and pseudohyphae necks and as a more diffuse array in emerging germ tubes of hyphae.</text>
</comment>
<comment type="PTM">
    <text evidence="11">Hyphal induction causes immediate phosphorylation at Ser-395 by GIN4 and at Ser-394 by CDC28-CCN1. GIN4 phosphorylation at Ser-395 primes CDC11 for further phosphorylation by CDC28-CCN1. CDC28-HGC1 then maintains CDC11 phosphorylation throughout hyphal growth. Ser-4 is also phosphorylated in yeast cells but not hyphal cells.</text>
</comment>
<comment type="PTM">
    <text evidence="11">Met-1 is acetylated.</text>
</comment>
<comment type="disruption phenotype">
    <text evidence="6 9 13">Causes greater curvature of cells growing in a filamentous manner and morphological defects in suspensor cells and chlamydospores. Leads to reduced tissue penetration and non-invasive fungal masses in mice infected kidneys. Also leads to hypersusceptibility to caspofungin.</text>
</comment>
<comment type="similarity">
    <text evidence="3">Belongs to the TRAFAC class TrmE-Era-EngA-EngB-Septin-like GTPase superfamily. Septin GTPase family.</text>
</comment>
<protein>
    <recommendedName>
        <fullName>Septin CDC11</fullName>
    </recommendedName>
    <alternativeName>
        <fullName>Cell division control protein 11</fullName>
    </alternativeName>
</protein>